<comment type="function">
    <text evidence="1">Catalyzes the reversible isomerization of glucose-6-phosphate to fructose-6-phosphate.</text>
</comment>
<comment type="catalytic activity">
    <reaction evidence="1">
        <text>alpha-D-glucose 6-phosphate = beta-D-fructose 6-phosphate</text>
        <dbReference type="Rhea" id="RHEA:11816"/>
        <dbReference type="ChEBI" id="CHEBI:57634"/>
        <dbReference type="ChEBI" id="CHEBI:58225"/>
        <dbReference type="EC" id="5.3.1.9"/>
    </reaction>
</comment>
<comment type="pathway">
    <text evidence="1">Carbohydrate biosynthesis; gluconeogenesis.</text>
</comment>
<comment type="pathway">
    <text evidence="1">Carbohydrate degradation; glycolysis; D-glyceraldehyde 3-phosphate and glycerone phosphate from D-glucose: step 2/4.</text>
</comment>
<comment type="subcellular location">
    <subcellularLocation>
        <location evidence="1">Cytoplasm</location>
    </subcellularLocation>
</comment>
<comment type="similarity">
    <text evidence="1">Belongs to the GPI family.</text>
</comment>
<keyword id="KW-0963">Cytoplasm</keyword>
<keyword id="KW-0312">Gluconeogenesis</keyword>
<keyword id="KW-0324">Glycolysis</keyword>
<keyword id="KW-0413">Isomerase</keyword>
<keyword id="KW-1185">Reference proteome</keyword>
<gene>
    <name evidence="1" type="primary">pgi</name>
    <name type="ordered locus">Rru_A2947</name>
</gene>
<protein>
    <recommendedName>
        <fullName evidence="1">Glucose-6-phosphate isomerase</fullName>
        <shortName evidence="1">GPI</shortName>
        <ecNumber evidence="1">5.3.1.9</ecNumber>
    </recommendedName>
    <alternativeName>
        <fullName evidence="1">Phosphoglucose isomerase</fullName>
        <shortName evidence="1">PGI</shortName>
    </alternativeName>
    <alternativeName>
        <fullName evidence="1">Phosphohexose isomerase</fullName>
        <shortName evidence="1">PHI</shortName>
    </alternativeName>
</protein>
<name>G6PI_RHORT</name>
<feature type="chain" id="PRO_0000230932" description="Glucose-6-phosphate isomerase">
    <location>
        <begin position="1"/>
        <end position="547"/>
    </location>
</feature>
<feature type="active site" description="Proton donor" evidence="1">
    <location>
        <position position="352"/>
    </location>
</feature>
<feature type="active site" evidence="1">
    <location>
        <position position="383"/>
    </location>
</feature>
<feature type="active site" evidence="1">
    <location>
        <position position="511"/>
    </location>
</feature>
<evidence type="ECO:0000255" key="1">
    <source>
        <dbReference type="HAMAP-Rule" id="MF_00473"/>
    </source>
</evidence>
<accession>Q2RQ51</accession>
<sequence>MPDPTTLSAWAALAAHAPTLSDQPLRVLFDADPDRFARFHLRFEDLVLDYSKNRITGETMALLADLARQSGVEARRDAMFAGEPINTTEGRAVLHVALRDPTPTPVLVDGADVKPAIAAVLAHMEAFSEAVRSGAWTGATGKAITDVVNIGIGGSDLGPVMVVEALKAYAKPGLRVHFVSNVDGTHIAETLKGLSPETTLFLVASKTFTTQETLTNAHTARDWLVGALGEPAVARHFAALSTNAKAVSAFGIDTANMFEFWDWVGGRYSLWSAIGLPIAISVGFANFRALLDGAHAMDTHFREAPIERNLPVILGLLGVWYGDFLGARAQAVLPYDQYLHRLAAYLQQADMESNGKRTTLDGKTVAYATGAVLFGEPGTNGQHSFYQLIHQGTSLIPCDFIAPAISHNPLGRHHAILLSNFLAQTEALMRGKTEAEARAELAAQGLAGEALEALLPHKVFPGNRPTNAILVKRLDPRTLGMLIALYEHKIHVQATVWNINAYDQWGVELGKQLAKAILPELEDATISPAHDSSTNGLIALYREFSAG</sequence>
<organism>
    <name type="scientific">Rhodospirillum rubrum (strain ATCC 11170 / ATH 1.1.1 / DSM 467 / LMG 4362 / NCIMB 8255 / S1)</name>
    <dbReference type="NCBI Taxonomy" id="269796"/>
    <lineage>
        <taxon>Bacteria</taxon>
        <taxon>Pseudomonadati</taxon>
        <taxon>Pseudomonadota</taxon>
        <taxon>Alphaproteobacteria</taxon>
        <taxon>Rhodospirillales</taxon>
        <taxon>Rhodospirillaceae</taxon>
        <taxon>Rhodospirillum</taxon>
    </lineage>
</organism>
<proteinExistence type="inferred from homology"/>
<dbReference type="EC" id="5.3.1.9" evidence="1"/>
<dbReference type="EMBL" id="CP000230">
    <property type="protein sequence ID" value="ABC23744.1"/>
    <property type="molecule type" value="Genomic_DNA"/>
</dbReference>
<dbReference type="RefSeq" id="WP_011390697.1">
    <property type="nucleotide sequence ID" value="NC_007643.1"/>
</dbReference>
<dbReference type="RefSeq" id="YP_428031.1">
    <property type="nucleotide sequence ID" value="NC_007643.1"/>
</dbReference>
<dbReference type="SMR" id="Q2RQ51"/>
<dbReference type="STRING" id="269796.Rru_A2947"/>
<dbReference type="EnsemblBacteria" id="ABC23744">
    <property type="protein sequence ID" value="ABC23744"/>
    <property type="gene ID" value="Rru_A2947"/>
</dbReference>
<dbReference type="KEGG" id="rru:Rru_A2947"/>
<dbReference type="PATRIC" id="fig|269796.9.peg.3055"/>
<dbReference type="eggNOG" id="COG0166">
    <property type="taxonomic scope" value="Bacteria"/>
</dbReference>
<dbReference type="HOGENOM" id="CLU_017947_3_1_5"/>
<dbReference type="PhylomeDB" id="Q2RQ51"/>
<dbReference type="UniPathway" id="UPA00109">
    <property type="reaction ID" value="UER00181"/>
</dbReference>
<dbReference type="UniPathway" id="UPA00138"/>
<dbReference type="Proteomes" id="UP000001929">
    <property type="component" value="Chromosome"/>
</dbReference>
<dbReference type="GO" id="GO:0005829">
    <property type="term" value="C:cytosol"/>
    <property type="evidence" value="ECO:0007669"/>
    <property type="project" value="TreeGrafter"/>
</dbReference>
<dbReference type="GO" id="GO:0097367">
    <property type="term" value="F:carbohydrate derivative binding"/>
    <property type="evidence" value="ECO:0007669"/>
    <property type="project" value="InterPro"/>
</dbReference>
<dbReference type="GO" id="GO:0004347">
    <property type="term" value="F:glucose-6-phosphate isomerase activity"/>
    <property type="evidence" value="ECO:0007669"/>
    <property type="project" value="UniProtKB-UniRule"/>
</dbReference>
<dbReference type="GO" id="GO:0048029">
    <property type="term" value="F:monosaccharide binding"/>
    <property type="evidence" value="ECO:0007669"/>
    <property type="project" value="TreeGrafter"/>
</dbReference>
<dbReference type="GO" id="GO:0006094">
    <property type="term" value="P:gluconeogenesis"/>
    <property type="evidence" value="ECO:0007669"/>
    <property type="project" value="UniProtKB-UniRule"/>
</dbReference>
<dbReference type="GO" id="GO:0051156">
    <property type="term" value="P:glucose 6-phosphate metabolic process"/>
    <property type="evidence" value="ECO:0007669"/>
    <property type="project" value="TreeGrafter"/>
</dbReference>
<dbReference type="GO" id="GO:0006096">
    <property type="term" value="P:glycolytic process"/>
    <property type="evidence" value="ECO:0007669"/>
    <property type="project" value="UniProtKB-UniRule"/>
</dbReference>
<dbReference type="CDD" id="cd05015">
    <property type="entry name" value="SIS_PGI_1"/>
    <property type="match status" value="1"/>
</dbReference>
<dbReference type="CDD" id="cd05016">
    <property type="entry name" value="SIS_PGI_2"/>
    <property type="match status" value="1"/>
</dbReference>
<dbReference type="FunFam" id="1.10.1390.10:FF:000001">
    <property type="entry name" value="Glucose-6-phosphate isomerase"/>
    <property type="match status" value="1"/>
</dbReference>
<dbReference type="FunFam" id="3.40.50.10490:FF:000004">
    <property type="entry name" value="Glucose-6-phosphate isomerase"/>
    <property type="match status" value="1"/>
</dbReference>
<dbReference type="Gene3D" id="1.10.1390.10">
    <property type="match status" value="1"/>
</dbReference>
<dbReference type="Gene3D" id="3.40.50.10490">
    <property type="entry name" value="Glucose-6-phosphate isomerase like protein, domain 1"/>
    <property type="match status" value="2"/>
</dbReference>
<dbReference type="HAMAP" id="MF_00473">
    <property type="entry name" value="G6P_isomerase"/>
    <property type="match status" value="1"/>
</dbReference>
<dbReference type="InterPro" id="IPR001672">
    <property type="entry name" value="G6P_Isomerase"/>
</dbReference>
<dbReference type="InterPro" id="IPR023096">
    <property type="entry name" value="G6P_Isomerase_C"/>
</dbReference>
<dbReference type="InterPro" id="IPR018189">
    <property type="entry name" value="Phosphoglucose_isomerase_CS"/>
</dbReference>
<dbReference type="InterPro" id="IPR046348">
    <property type="entry name" value="SIS_dom_sf"/>
</dbReference>
<dbReference type="InterPro" id="IPR035476">
    <property type="entry name" value="SIS_PGI_1"/>
</dbReference>
<dbReference type="InterPro" id="IPR035482">
    <property type="entry name" value="SIS_PGI_2"/>
</dbReference>
<dbReference type="NCBIfam" id="NF001211">
    <property type="entry name" value="PRK00179.1"/>
    <property type="match status" value="1"/>
</dbReference>
<dbReference type="PANTHER" id="PTHR11469">
    <property type="entry name" value="GLUCOSE-6-PHOSPHATE ISOMERASE"/>
    <property type="match status" value="1"/>
</dbReference>
<dbReference type="PANTHER" id="PTHR11469:SF1">
    <property type="entry name" value="GLUCOSE-6-PHOSPHATE ISOMERASE"/>
    <property type="match status" value="1"/>
</dbReference>
<dbReference type="Pfam" id="PF00342">
    <property type="entry name" value="PGI"/>
    <property type="match status" value="1"/>
</dbReference>
<dbReference type="PRINTS" id="PR00662">
    <property type="entry name" value="G6PISOMERASE"/>
</dbReference>
<dbReference type="SUPFAM" id="SSF53697">
    <property type="entry name" value="SIS domain"/>
    <property type="match status" value="1"/>
</dbReference>
<dbReference type="PROSITE" id="PS00765">
    <property type="entry name" value="P_GLUCOSE_ISOMERASE_1"/>
    <property type="match status" value="1"/>
</dbReference>
<dbReference type="PROSITE" id="PS00174">
    <property type="entry name" value="P_GLUCOSE_ISOMERASE_2"/>
    <property type="match status" value="1"/>
</dbReference>
<dbReference type="PROSITE" id="PS51463">
    <property type="entry name" value="P_GLUCOSE_ISOMERASE_3"/>
    <property type="match status" value="1"/>
</dbReference>
<reference key="1">
    <citation type="journal article" date="2011" name="Stand. Genomic Sci.">
        <title>Complete genome sequence of Rhodospirillum rubrum type strain (S1).</title>
        <authorList>
            <person name="Munk A.C."/>
            <person name="Copeland A."/>
            <person name="Lucas S."/>
            <person name="Lapidus A."/>
            <person name="Del Rio T.G."/>
            <person name="Barry K."/>
            <person name="Detter J.C."/>
            <person name="Hammon N."/>
            <person name="Israni S."/>
            <person name="Pitluck S."/>
            <person name="Brettin T."/>
            <person name="Bruce D."/>
            <person name="Han C."/>
            <person name="Tapia R."/>
            <person name="Gilna P."/>
            <person name="Schmutz J."/>
            <person name="Larimer F."/>
            <person name="Land M."/>
            <person name="Kyrpides N.C."/>
            <person name="Mavromatis K."/>
            <person name="Richardson P."/>
            <person name="Rohde M."/>
            <person name="Goeker M."/>
            <person name="Klenk H.P."/>
            <person name="Zhang Y."/>
            <person name="Roberts G.P."/>
            <person name="Reslewic S."/>
            <person name="Schwartz D.C."/>
        </authorList>
    </citation>
    <scope>NUCLEOTIDE SEQUENCE [LARGE SCALE GENOMIC DNA]</scope>
    <source>
        <strain>ATCC 11170 / ATH 1.1.1 / DSM 467 / LMG 4362 / NCIMB 8255 / S1</strain>
    </source>
</reference>